<accession>C1E3X9</accession>
<proteinExistence type="inferred from homology"/>
<gene>
    <name evidence="1" type="primary">FEN1</name>
    <name type="ORF">MICPUN_96332</name>
</gene>
<name>FEN1_MICCC</name>
<reference key="1">
    <citation type="journal article" date="2009" name="Science">
        <title>Green evolution and dynamic adaptations revealed by genomes of the marine picoeukaryotes Micromonas.</title>
        <authorList>
            <person name="Worden A.Z."/>
            <person name="Lee J.H."/>
            <person name="Mock T."/>
            <person name="Rouze P."/>
            <person name="Simmons M.P."/>
            <person name="Aerts A.L."/>
            <person name="Allen A.E."/>
            <person name="Cuvelier M.L."/>
            <person name="Derelle E."/>
            <person name="Everett M.V."/>
            <person name="Foulon E."/>
            <person name="Grimwood J."/>
            <person name="Gundlach H."/>
            <person name="Henrissat B."/>
            <person name="Napoli C."/>
            <person name="McDonald S.M."/>
            <person name="Parker M.S."/>
            <person name="Rombauts S."/>
            <person name="Salamov A."/>
            <person name="Von Dassow P."/>
            <person name="Badger J.H."/>
            <person name="Coutinho P.M."/>
            <person name="Demir E."/>
            <person name="Dubchak I."/>
            <person name="Gentemann C."/>
            <person name="Eikrem W."/>
            <person name="Gready J.E."/>
            <person name="John U."/>
            <person name="Lanier W."/>
            <person name="Lindquist E.A."/>
            <person name="Lucas S."/>
            <person name="Mayer K.F."/>
            <person name="Moreau H."/>
            <person name="Not F."/>
            <person name="Otillar R."/>
            <person name="Panaud O."/>
            <person name="Pangilinan J."/>
            <person name="Paulsen I."/>
            <person name="Piegu B."/>
            <person name="Poliakov A."/>
            <person name="Robbens S."/>
            <person name="Schmutz J."/>
            <person name="Toulza E."/>
            <person name="Wyss T."/>
            <person name="Zelensky A."/>
            <person name="Zhou K."/>
            <person name="Armbrust E.V."/>
            <person name="Bhattacharya D."/>
            <person name="Goodenough U.W."/>
            <person name="Van de Peer Y."/>
            <person name="Grigoriev I.V."/>
        </authorList>
    </citation>
    <scope>NUCLEOTIDE SEQUENCE [LARGE SCALE GENOMIC DNA]</scope>
    <source>
        <strain>RCC299 / NOUM17</strain>
    </source>
</reference>
<keyword id="KW-0227">DNA damage</keyword>
<keyword id="KW-0234">DNA repair</keyword>
<keyword id="KW-0235">DNA replication</keyword>
<keyword id="KW-0255">Endonuclease</keyword>
<keyword id="KW-0269">Exonuclease</keyword>
<keyword id="KW-0378">Hydrolase</keyword>
<keyword id="KW-0460">Magnesium</keyword>
<keyword id="KW-0479">Metal-binding</keyword>
<keyword id="KW-0496">Mitochondrion</keyword>
<keyword id="KW-0540">Nuclease</keyword>
<keyword id="KW-0539">Nucleus</keyword>
<keyword id="KW-0597">Phosphoprotein</keyword>
<keyword id="KW-1185">Reference proteome</keyword>
<sequence length="384" mass="42592">MGIKGLTKLLSDYAPGCMREQKFEGYLDRKVAIDASMHIYQFMMVVGRSGEQQLTNEAGEVTSHLQGMFTRTLRMLKAGIKPVYVFDGKPPTMKGGELAKRKDKREAAESALEKAKEAGDQEEIEKLSKRTVRVSKVHSEEVMKLARFLGLPVFEAPCEAEATCAALCKAGLVYAAASEDMDTLCFSTPKLARNLMAPSSQEKPILEFDFDKLLAGLELTWDQFIDVCILCGCDYCDSIKGIGPVNALKYIKQYGNIEGLLEHLDKEKYPVPDDWPYKEARVLFKNPEVVQTDGLTLKWTAPDEEAVVAFLCGEKSFNEDRIRKQLADLKKARSQGGQNRLETFFGAATVKSSTVGKRKEPEKGKGKFGAAGGKKSKGVTKRKF</sequence>
<comment type="function">
    <text evidence="1">Structure-specific nuclease with 5'-flap endonuclease and 5'-3' exonuclease activities involved in DNA replication and repair. During DNA replication, cleaves the 5'-overhanging flap structure that is generated by displacement synthesis when DNA polymerase encounters the 5'-end of a downstream Okazaki fragment. It enters the flap from the 5'-end and then tracks to cleave the flap base, leaving a nick for ligation. Also involved in the long patch base excision repair (LP-BER) pathway, by cleaving within the apurinic/apyrimidinic (AP) site-terminated flap. Acts as a genome stabilization factor that prevents flaps from equilibrating into structures that lead to duplications and deletions. Also possesses 5'-3' exonuclease activity on nicked or gapped double-stranded DNA, and exhibits RNase H activity. Also involved in replication and repair of rDNA and in repairing mitochondrial DNA.</text>
</comment>
<comment type="cofactor">
    <cofactor evidence="1">
        <name>Mg(2+)</name>
        <dbReference type="ChEBI" id="CHEBI:18420"/>
    </cofactor>
    <text evidence="1">Binds 2 magnesium ions per subunit. They probably participate in the reaction catalyzed by the enzyme. May bind an additional third magnesium ion after substrate binding.</text>
</comment>
<comment type="subunit">
    <text evidence="1">Interacts with PCNA. Three molecules of FEN1 bind to one PCNA trimer with each molecule binding to one PCNA monomer. PCNA stimulates the nuclease activity without altering cleavage specificity.</text>
</comment>
<comment type="subcellular location">
    <subcellularLocation>
        <location evidence="1">Nucleus</location>
        <location evidence="1">Nucleolus</location>
    </subcellularLocation>
    <subcellularLocation>
        <location evidence="1">Nucleus</location>
        <location evidence="1">Nucleoplasm</location>
    </subcellularLocation>
    <subcellularLocation>
        <location evidence="1">Mitochondrion</location>
    </subcellularLocation>
    <text evidence="1">Resides mostly in the nucleoli and relocalizes to the nucleoplasm upon DNA damage.</text>
</comment>
<comment type="PTM">
    <text evidence="1">Phosphorylated. Phosphorylation upon DNA damage induces relocalization to the nuclear plasma.</text>
</comment>
<comment type="similarity">
    <text evidence="1">Belongs to the XPG/RAD2 endonuclease family. FEN1 subfamily.</text>
</comment>
<feature type="chain" id="PRO_0000403521" description="Flap endonuclease 1">
    <location>
        <begin position="1"/>
        <end position="384"/>
    </location>
</feature>
<feature type="region of interest" description="N-domain">
    <location>
        <begin position="1"/>
        <end position="105"/>
    </location>
</feature>
<feature type="region of interest" description="I-domain">
    <location>
        <begin position="123"/>
        <end position="254"/>
    </location>
</feature>
<feature type="region of interest" description="Interaction with PCNA" evidence="1">
    <location>
        <begin position="337"/>
        <end position="345"/>
    </location>
</feature>
<feature type="region of interest" description="Disordered" evidence="2">
    <location>
        <begin position="353"/>
        <end position="384"/>
    </location>
</feature>
<feature type="compositionally biased region" description="Basic residues" evidence="2">
    <location>
        <begin position="374"/>
        <end position="384"/>
    </location>
</feature>
<feature type="binding site" evidence="1">
    <location>
        <position position="34"/>
    </location>
    <ligand>
        <name>Mg(2+)</name>
        <dbReference type="ChEBI" id="CHEBI:18420"/>
        <label>1</label>
    </ligand>
</feature>
<feature type="binding site" evidence="1">
    <location>
        <position position="71"/>
    </location>
    <ligand>
        <name>DNA</name>
        <dbReference type="ChEBI" id="CHEBI:16991"/>
    </ligand>
</feature>
<feature type="binding site" evidence="1">
    <location>
        <position position="87"/>
    </location>
    <ligand>
        <name>Mg(2+)</name>
        <dbReference type="ChEBI" id="CHEBI:18420"/>
        <label>1</label>
    </ligand>
</feature>
<feature type="binding site" evidence="1">
    <location>
        <position position="159"/>
    </location>
    <ligand>
        <name>DNA</name>
        <dbReference type="ChEBI" id="CHEBI:16991"/>
    </ligand>
</feature>
<feature type="binding site" evidence="1">
    <location>
        <position position="159"/>
    </location>
    <ligand>
        <name>Mg(2+)</name>
        <dbReference type="ChEBI" id="CHEBI:18420"/>
        <label>1</label>
    </ligand>
</feature>
<feature type="binding site" evidence="1">
    <location>
        <position position="161"/>
    </location>
    <ligand>
        <name>Mg(2+)</name>
        <dbReference type="ChEBI" id="CHEBI:18420"/>
        <label>1</label>
    </ligand>
</feature>
<feature type="binding site" evidence="1">
    <location>
        <position position="180"/>
    </location>
    <ligand>
        <name>Mg(2+)</name>
        <dbReference type="ChEBI" id="CHEBI:18420"/>
        <label>2</label>
    </ligand>
</feature>
<feature type="binding site" evidence="1">
    <location>
        <position position="182"/>
    </location>
    <ligand>
        <name>Mg(2+)</name>
        <dbReference type="ChEBI" id="CHEBI:18420"/>
        <label>2</label>
    </ligand>
</feature>
<feature type="binding site" evidence="1">
    <location>
        <position position="232"/>
    </location>
    <ligand>
        <name>DNA</name>
        <dbReference type="ChEBI" id="CHEBI:16991"/>
    </ligand>
</feature>
<feature type="binding site" evidence="1">
    <location>
        <position position="234"/>
    </location>
    <ligand>
        <name>DNA</name>
        <dbReference type="ChEBI" id="CHEBI:16991"/>
    </ligand>
</feature>
<feature type="binding site" evidence="1">
    <location>
        <position position="234"/>
    </location>
    <ligand>
        <name>Mg(2+)</name>
        <dbReference type="ChEBI" id="CHEBI:18420"/>
        <label>2</label>
    </ligand>
</feature>
<protein>
    <recommendedName>
        <fullName evidence="1">Flap endonuclease 1</fullName>
        <shortName evidence="1">FEN-1</shortName>
        <ecNumber evidence="1">3.1.-.-</ecNumber>
    </recommendedName>
    <alternativeName>
        <fullName evidence="1">Flap structure-specific endonuclease 1</fullName>
    </alternativeName>
</protein>
<organism>
    <name type="scientific">Micromonas commoda (strain RCC299 / NOUM17 / CCMP2709)</name>
    <name type="common">Picoplanktonic green alga</name>
    <dbReference type="NCBI Taxonomy" id="296587"/>
    <lineage>
        <taxon>Eukaryota</taxon>
        <taxon>Viridiplantae</taxon>
        <taxon>Chlorophyta</taxon>
        <taxon>Mamiellophyceae</taxon>
        <taxon>Mamiellales</taxon>
        <taxon>Mamiellaceae</taxon>
        <taxon>Micromonas</taxon>
    </lineage>
</organism>
<dbReference type="EC" id="3.1.-.-" evidence="1"/>
<dbReference type="EMBL" id="CP001325">
    <property type="protein sequence ID" value="ACO63012.1"/>
    <property type="molecule type" value="Genomic_DNA"/>
</dbReference>
<dbReference type="RefSeq" id="XP_002501754.1">
    <property type="nucleotide sequence ID" value="XM_002501708.1"/>
</dbReference>
<dbReference type="SMR" id="C1E3X9"/>
<dbReference type="FunCoup" id="C1E3X9">
    <property type="interactions" value="1712"/>
</dbReference>
<dbReference type="STRING" id="296587.C1E3X9"/>
<dbReference type="GeneID" id="8242661"/>
<dbReference type="KEGG" id="mis:MICPUN_96332"/>
<dbReference type="eggNOG" id="KOG2519">
    <property type="taxonomic scope" value="Eukaryota"/>
</dbReference>
<dbReference type="InParanoid" id="C1E3X9"/>
<dbReference type="OMA" id="MGIPWVQ"/>
<dbReference type="OrthoDB" id="1937206at2759"/>
<dbReference type="Proteomes" id="UP000002009">
    <property type="component" value="Chromosome 4"/>
</dbReference>
<dbReference type="GO" id="GO:0005739">
    <property type="term" value="C:mitochondrion"/>
    <property type="evidence" value="ECO:0007669"/>
    <property type="project" value="UniProtKB-SubCell"/>
</dbReference>
<dbReference type="GO" id="GO:0005730">
    <property type="term" value="C:nucleolus"/>
    <property type="evidence" value="ECO:0007669"/>
    <property type="project" value="UniProtKB-SubCell"/>
</dbReference>
<dbReference type="GO" id="GO:0005654">
    <property type="term" value="C:nucleoplasm"/>
    <property type="evidence" value="ECO:0007669"/>
    <property type="project" value="UniProtKB-SubCell"/>
</dbReference>
<dbReference type="GO" id="GO:0008409">
    <property type="term" value="F:5'-3' exonuclease activity"/>
    <property type="evidence" value="ECO:0007669"/>
    <property type="project" value="UniProtKB-UniRule"/>
</dbReference>
<dbReference type="GO" id="GO:0017108">
    <property type="term" value="F:5'-flap endonuclease activity"/>
    <property type="evidence" value="ECO:0007669"/>
    <property type="project" value="UniProtKB-UniRule"/>
</dbReference>
<dbReference type="GO" id="GO:0003677">
    <property type="term" value="F:DNA binding"/>
    <property type="evidence" value="ECO:0007669"/>
    <property type="project" value="UniProtKB-UniRule"/>
</dbReference>
<dbReference type="GO" id="GO:0000287">
    <property type="term" value="F:magnesium ion binding"/>
    <property type="evidence" value="ECO:0007669"/>
    <property type="project" value="UniProtKB-UniRule"/>
</dbReference>
<dbReference type="GO" id="GO:0006284">
    <property type="term" value="P:base-excision repair"/>
    <property type="evidence" value="ECO:0007669"/>
    <property type="project" value="UniProtKB-UniRule"/>
</dbReference>
<dbReference type="GO" id="GO:0043137">
    <property type="term" value="P:DNA replication, removal of RNA primer"/>
    <property type="evidence" value="ECO:0007669"/>
    <property type="project" value="UniProtKB-UniRule"/>
</dbReference>
<dbReference type="CDD" id="cd09907">
    <property type="entry name" value="H3TH_FEN1-Euk"/>
    <property type="match status" value="1"/>
</dbReference>
<dbReference type="CDD" id="cd09867">
    <property type="entry name" value="PIN_FEN1"/>
    <property type="match status" value="1"/>
</dbReference>
<dbReference type="FunFam" id="1.10.150.20:FF:000009">
    <property type="entry name" value="Flap endonuclease 1"/>
    <property type="match status" value="1"/>
</dbReference>
<dbReference type="FunFam" id="3.40.50.1010:FF:000016">
    <property type="entry name" value="Flap endonuclease 1"/>
    <property type="match status" value="1"/>
</dbReference>
<dbReference type="Gene3D" id="1.10.150.20">
    <property type="entry name" value="5' to 3' exonuclease, C-terminal subdomain"/>
    <property type="match status" value="1"/>
</dbReference>
<dbReference type="Gene3D" id="3.40.50.1010">
    <property type="entry name" value="5'-nuclease"/>
    <property type="match status" value="1"/>
</dbReference>
<dbReference type="HAMAP" id="MF_00614">
    <property type="entry name" value="Fen"/>
    <property type="match status" value="1"/>
</dbReference>
<dbReference type="InterPro" id="IPR036279">
    <property type="entry name" value="5-3_exonuclease_C_sf"/>
</dbReference>
<dbReference type="InterPro" id="IPR023426">
    <property type="entry name" value="Flap_endonuc"/>
</dbReference>
<dbReference type="InterPro" id="IPR008918">
    <property type="entry name" value="HhH2"/>
</dbReference>
<dbReference type="InterPro" id="IPR029060">
    <property type="entry name" value="PIN-like_dom_sf"/>
</dbReference>
<dbReference type="InterPro" id="IPR006086">
    <property type="entry name" value="XPG-I_dom"/>
</dbReference>
<dbReference type="InterPro" id="IPR006084">
    <property type="entry name" value="XPG/Rad2"/>
</dbReference>
<dbReference type="InterPro" id="IPR019974">
    <property type="entry name" value="XPG_CS"/>
</dbReference>
<dbReference type="InterPro" id="IPR006085">
    <property type="entry name" value="XPG_DNA_repair_N"/>
</dbReference>
<dbReference type="PANTHER" id="PTHR11081:SF9">
    <property type="entry name" value="FLAP ENDONUCLEASE 1"/>
    <property type="match status" value="1"/>
</dbReference>
<dbReference type="PANTHER" id="PTHR11081">
    <property type="entry name" value="FLAP ENDONUCLEASE FAMILY MEMBER"/>
    <property type="match status" value="1"/>
</dbReference>
<dbReference type="Pfam" id="PF00867">
    <property type="entry name" value="XPG_I"/>
    <property type="match status" value="1"/>
</dbReference>
<dbReference type="Pfam" id="PF00752">
    <property type="entry name" value="XPG_N"/>
    <property type="match status" value="1"/>
</dbReference>
<dbReference type="PRINTS" id="PR00853">
    <property type="entry name" value="XPGRADSUPER"/>
</dbReference>
<dbReference type="SMART" id="SM00279">
    <property type="entry name" value="HhH2"/>
    <property type="match status" value="1"/>
</dbReference>
<dbReference type="SMART" id="SM00484">
    <property type="entry name" value="XPGI"/>
    <property type="match status" value="1"/>
</dbReference>
<dbReference type="SMART" id="SM00485">
    <property type="entry name" value="XPGN"/>
    <property type="match status" value="1"/>
</dbReference>
<dbReference type="SUPFAM" id="SSF47807">
    <property type="entry name" value="5' to 3' exonuclease, C-terminal subdomain"/>
    <property type="match status" value="1"/>
</dbReference>
<dbReference type="SUPFAM" id="SSF88723">
    <property type="entry name" value="PIN domain-like"/>
    <property type="match status" value="1"/>
</dbReference>
<dbReference type="PROSITE" id="PS00841">
    <property type="entry name" value="XPG_1"/>
    <property type="match status" value="1"/>
</dbReference>
<evidence type="ECO:0000255" key="1">
    <source>
        <dbReference type="HAMAP-Rule" id="MF_03140"/>
    </source>
</evidence>
<evidence type="ECO:0000256" key="2">
    <source>
        <dbReference type="SAM" id="MobiDB-lite"/>
    </source>
</evidence>